<dbReference type="EMBL" id="FJ899139">
    <property type="protein sequence ID" value="ACT82820.1"/>
    <property type="molecule type" value="Genomic_DNA"/>
</dbReference>
<dbReference type="EMBL" id="AB023041">
    <property type="protein sequence ID" value="BAB01053.1"/>
    <property type="molecule type" value="Genomic_DNA"/>
</dbReference>
<dbReference type="EMBL" id="CP002686">
    <property type="protein sequence ID" value="AEE77089.1"/>
    <property type="molecule type" value="Genomic_DNA"/>
</dbReference>
<dbReference type="EMBL" id="BT028939">
    <property type="protein sequence ID" value="ABI49486.1"/>
    <property type="molecule type" value="mRNA"/>
</dbReference>
<dbReference type="EMBL" id="AY086873">
    <property type="protein sequence ID" value="AAM63919.1"/>
    <property type="status" value="ALT_INIT"/>
    <property type="molecule type" value="mRNA"/>
</dbReference>
<dbReference type="RefSeq" id="NP_566783.1">
    <property type="nucleotide sequence ID" value="NM_113494.2"/>
</dbReference>
<dbReference type="SMR" id="Q9LUA1"/>
<dbReference type="STRING" id="3702.Q9LUA1"/>
<dbReference type="GlyCosmos" id="Q9LUA1">
    <property type="glycosylation" value="1 site, No reported glycans"/>
</dbReference>
<dbReference type="iPTMnet" id="Q9LUA1"/>
<dbReference type="PaxDb" id="3702-AT3G25905.1"/>
<dbReference type="EnsemblPlants" id="AT3G25905.1">
    <property type="protein sequence ID" value="AT3G25905.1"/>
    <property type="gene ID" value="AT3G25905"/>
</dbReference>
<dbReference type="GeneID" id="822187"/>
<dbReference type="Gramene" id="AT3G25905.1">
    <property type="protein sequence ID" value="AT3G25905.1"/>
    <property type="gene ID" value="AT3G25905"/>
</dbReference>
<dbReference type="KEGG" id="ath:AT3G25905"/>
<dbReference type="Araport" id="AT3G25905"/>
<dbReference type="TAIR" id="AT3G25905">
    <property type="gene designation" value="CLE27"/>
</dbReference>
<dbReference type="HOGENOM" id="CLU_2593092_0_0_1"/>
<dbReference type="InParanoid" id="Q9LUA1"/>
<dbReference type="OMA" id="THAREWR"/>
<dbReference type="OrthoDB" id="1298458at2759"/>
<dbReference type="PhylomeDB" id="Q9LUA1"/>
<dbReference type="PRO" id="PR:Q9LUA1"/>
<dbReference type="Proteomes" id="UP000006548">
    <property type="component" value="Chromosome 3"/>
</dbReference>
<dbReference type="ExpressionAtlas" id="Q9LUA1">
    <property type="expression patterns" value="baseline and differential"/>
</dbReference>
<dbReference type="GO" id="GO:0048046">
    <property type="term" value="C:apoplast"/>
    <property type="evidence" value="ECO:0000255"/>
    <property type="project" value="TAIR"/>
</dbReference>
<dbReference type="GO" id="GO:0045168">
    <property type="term" value="P:cell-cell signaling involved in cell fate commitment"/>
    <property type="evidence" value="ECO:0000250"/>
    <property type="project" value="UniProtKB"/>
</dbReference>
<dbReference type="InterPro" id="IPR040274">
    <property type="entry name" value="CLE27/CLE43"/>
</dbReference>
<dbReference type="PANTHER" id="PTHR37184">
    <property type="entry name" value="CLAVATA3/ESR (CLE)-RELATED PROTEIN 27"/>
    <property type="match status" value="1"/>
</dbReference>
<dbReference type="PANTHER" id="PTHR37184:SF8">
    <property type="entry name" value="CLAVATA3_ESR (CLE)-RELATED PROTEIN 27"/>
    <property type="match status" value="1"/>
</dbReference>
<sequence length="91" mass="10286">MTHAREWRSSLTTTLLMVILLSYMLHLFCVYSRVGAIRIFPETPASGKRQEEDLMKKYFGAGKFPPVDSFVGKGISESKRIVPSCPDPLHN</sequence>
<gene>
    <name evidence="5" type="primary">CLE27</name>
    <name evidence="7" type="ordered locus">At3g25905</name>
    <name evidence="8" type="ORF">MPE11</name>
</gene>
<proteinExistence type="evidence at transcript level"/>
<organism>
    <name type="scientific">Arabidopsis thaliana</name>
    <name type="common">Mouse-ear cress</name>
    <dbReference type="NCBI Taxonomy" id="3702"/>
    <lineage>
        <taxon>Eukaryota</taxon>
        <taxon>Viridiplantae</taxon>
        <taxon>Streptophyta</taxon>
        <taxon>Embryophyta</taxon>
        <taxon>Tracheophyta</taxon>
        <taxon>Spermatophyta</taxon>
        <taxon>Magnoliopsida</taxon>
        <taxon>eudicotyledons</taxon>
        <taxon>Gunneridae</taxon>
        <taxon>Pentapetalae</taxon>
        <taxon>rosids</taxon>
        <taxon>malvids</taxon>
        <taxon>Brassicales</taxon>
        <taxon>Brassicaceae</taxon>
        <taxon>Camelineae</taxon>
        <taxon>Arabidopsis</taxon>
    </lineage>
</organism>
<protein>
    <recommendedName>
        <fullName evidence="5">CLAVATA3/ESR (CLE)-related protein 27</fullName>
    </recommendedName>
    <component>
        <recommendedName>
            <fullName evidence="5">CLE27p</fullName>
        </recommendedName>
    </component>
</protein>
<evidence type="ECO:0000250" key="1">
    <source>
        <dbReference type="UniProtKB" id="O49519"/>
    </source>
</evidence>
<evidence type="ECO:0000255" key="2"/>
<evidence type="ECO:0000269" key="3">
    <source>
    </source>
</evidence>
<evidence type="ECO:0000269" key="4">
    <source>
    </source>
</evidence>
<evidence type="ECO:0000303" key="5">
    <source>
    </source>
</evidence>
<evidence type="ECO:0000305" key="6"/>
<evidence type="ECO:0000312" key="7">
    <source>
        <dbReference type="Araport" id="AT3G25905"/>
    </source>
</evidence>
<evidence type="ECO:0000312" key="8">
    <source>
        <dbReference type="EMBL" id="BAB01053.1"/>
    </source>
</evidence>
<accession>Q9LUA1</accession>
<accession>Q8LC08</accession>
<reference key="1">
    <citation type="journal article" date="2010" name="Theor. Appl. Genet.">
        <title>Intraspecific hybrids of Arabidopsis thaliana revealed no gross alterations in endopolyploidy, DNA methylation, histone modifications and transcript levels.</title>
        <authorList>
            <person name="Banaei Moghaddam A.M."/>
            <person name="Fuchs J."/>
            <person name="Czauderna T."/>
            <person name="Houben A."/>
            <person name="Mette M.F."/>
        </authorList>
    </citation>
    <scope>NUCLEOTIDE SEQUENCE [GENOMIC DNA]</scope>
</reference>
<reference key="2">
    <citation type="journal article" date="2000" name="DNA Res.">
        <title>Structural analysis of Arabidopsis thaliana chromosome 3. I. Sequence features of the regions of 4,504,864 bp covered by sixty P1 and TAC clones.</title>
        <authorList>
            <person name="Sato S."/>
            <person name="Nakamura Y."/>
            <person name="Kaneko T."/>
            <person name="Katoh T."/>
            <person name="Asamizu E."/>
            <person name="Tabata S."/>
        </authorList>
    </citation>
    <scope>NUCLEOTIDE SEQUENCE [LARGE SCALE GENOMIC DNA]</scope>
    <source>
        <strain>cv. Columbia</strain>
    </source>
</reference>
<reference key="3">
    <citation type="journal article" date="2017" name="Plant J.">
        <title>Araport11: a complete reannotation of the Arabidopsis thaliana reference genome.</title>
        <authorList>
            <person name="Cheng C.Y."/>
            <person name="Krishnakumar V."/>
            <person name="Chan A.P."/>
            <person name="Thibaud-Nissen F."/>
            <person name="Schobel S."/>
            <person name="Town C.D."/>
        </authorList>
    </citation>
    <scope>GENOME REANNOTATION</scope>
    <source>
        <strain>cv. Columbia</strain>
    </source>
</reference>
<reference key="4">
    <citation type="submission" date="2006-09" db="EMBL/GenBank/DDBJ databases">
        <title>Arabidopsis ORF clones.</title>
        <authorList>
            <person name="Quinitio C."/>
            <person name="Chen H."/>
            <person name="Kim C.J."/>
            <person name="Shinn P."/>
            <person name="Ecker J.R."/>
        </authorList>
    </citation>
    <scope>NUCLEOTIDE SEQUENCE [LARGE SCALE MRNA]</scope>
    <source>
        <strain>cv. Columbia</strain>
    </source>
</reference>
<reference key="5">
    <citation type="submission" date="2002-03" db="EMBL/GenBank/DDBJ databases">
        <title>Full-length cDNA from Arabidopsis thaliana.</title>
        <authorList>
            <person name="Brover V.V."/>
            <person name="Troukhan M.E."/>
            <person name="Alexandrov N.A."/>
            <person name="Lu Y.-P."/>
            <person name="Flavell R.B."/>
            <person name="Feldmann K.A."/>
        </authorList>
    </citation>
    <scope>NUCLEOTIDE SEQUENCE [LARGE SCALE MRNA]</scope>
</reference>
<reference key="6">
    <citation type="journal article" date="2001" name="Plant Physiol.">
        <title>A large family of genes that share homology with CLAVATA3.</title>
        <authorList>
            <person name="Cock J.M."/>
            <person name="McCormick S."/>
        </authorList>
    </citation>
    <scope>GENE FAMILY</scope>
    <scope>NOMENCLATURE</scope>
</reference>
<reference key="7">
    <citation type="journal article" date="2003" name="Plant Mol. Biol.">
        <title>The Arabidopsis CLV3-like (CLE) genes are expressed in diverse tissues and encode secreted proteins.</title>
        <authorList>
            <person name="Sharma V.K."/>
            <person name="Ramirez J."/>
            <person name="Fletcher J.C."/>
        </authorList>
    </citation>
    <scope>TISSUE SPECIFICITY</scope>
</reference>
<reference key="8">
    <citation type="journal article" date="2006" name="Plant Physiol.">
        <title>Gain-of-function phenotypes of many CLAVATA3/ESR genes, including four new family members, correlate with tandem variations in the conserved CLAVATA3/ESR domain.</title>
        <authorList>
            <person name="Strabala T.J."/>
            <person name="O'donnell P.J."/>
            <person name="Smit A.-M."/>
            <person name="Ampomah-Dwamena C."/>
            <person name="Martin E.J."/>
            <person name="Netzler N."/>
            <person name="Nieuwenhuizen N.J."/>
            <person name="Quinn B.D."/>
            <person name="Foote H.C.C."/>
            <person name="Hudson K.R."/>
        </authorList>
    </citation>
    <scope>GENE FAMILY</scope>
</reference>
<reference key="9">
    <citation type="journal article" date="2006" name="Science">
        <title>Dodeca-CLE peptides as suppressors of plant stem cell differentiation.</title>
        <authorList>
            <person name="Ito Y."/>
            <person name="Nakanomyo I."/>
            <person name="Motose H."/>
            <person name="Iwamoto K."/>
            <person name="Sawa S."/>
            <person name="Dohmae N."/>
            <person name="Fukuda H."/>
        </authorList>
    </citation>
    <scope>FUNCTION</scope>
</reference>
<reference key="10">
    <citation type="journal article" date="2008" name="Cell. Mol. Life Sci.">
        <title>The CLE family of plant polypeptide signaling molecules.</title>
        <authorList>
            <person name="Jun J.H."/>
            <person name="Fiume E."/>
            <person name="Fletcher J.C."/>
        </authorList>
    </citation>
    <scope>REVIEW</scope>
</reference>
<reference key="11">
    <citation type="journal article" date="2008" name="Curr. Opin. Plant Biol.">
        <title>Diverse and conserved roles of CLE peptides.</title>
        <authorList>
            <person name="Mitchum M.G."/>
            <person name="Wang X."/>
            <person name="Davis E.L."/>
        </authorList>
    </citation>
    <scope>REVIEW</scope>
</reference>
<reference key="12">
    <citation type="journal article" date="2010" name="Protoplasma">
        <title>CLE peptide signaling during plant development.</title>
        <authorList>
            <person name="Wang G."/>
            <person name="Fiers M."/>
        </authorList>
    </citation>
    <scope>REVIEW</scope>
</reference>
<comment type="function">
    <molecule>CLE27p</molecule>
    <text evidence="4">Extracellular signal peptide that regulates cell fate. Represses root apical meristem maintenance.</text>
</comment>
<comment type="subcellular location">
    <molecule>CLE27p</molecule>
    <subcellularLocation>
        <location evidence="1">Secreted</location>
        <location evidence="1">Extracellular space</location>
    </subcellularLocation>
</comment>
<comment type="tissue specificity">
    <molecule>CLE27p</molecule>
    <text evidence="3">Mostly expressed in apex, and, to a lower extent, in roots, leaves, flowers and siliques.</text>
</comment>
<comment type="PTM">
    <molecule>CLE27p</molecule>
    <text evidence="1">The O-glycosylation (arabinosylation) of the hydroxyproline Pro-86 enhances binding affinity of the CLE27p peptide for its receptor.</text>
</comment>
<comment type="similarity">
    <text evidence="6">Belongs to the CLV3/ESR signal peptide family.</text>
</comment>
<comment type="sequence caution" evidence="6">
    <conflict type="erroneous initiation">
        <sequence resource="EMBL-CDS" id="AAM63919"/>
    </conflict>
    <text>Truncated N-terminus.</text>
</comment>
<feature type="signal peptide" evidence="2">
    <location>
        <begin position="1"/>
        <end position="35"/>
    </location>
</feature>
<feature type="chain" id="PRO_0000401279" description="CLAVATA3/ESR (CLE)-related protein 27">
    <location>
        <begin position="36"/>
        <end position="91"/>
    </location>
</feature>
<feature type="peptide" id="PRO_0000401280" description="CLE27p" evidence="1">
    <location>
        <begin position="80"/>
        <end position="91"/>
    </location>
</feature>
<feature type="modified residue" description="Hydroxyproline" evidence="1">
    <location>
        <position position="83"/>
    </location>
</feature>
<feature type="modified residue" description="Hydroxyproline" evidence="1">
    <location>
        <position position="86"/>
    </location>
</feature>
<feature type="glycosylation site" description="O-linked (Ara...) hydroxyproline" evidence="1">
    <location>
        <position position="86"/>
    </location>
</feature>
<name>CLE27_ARATH</name>
<keyword id="KW-0217">Developmental protein</keyword>
<keyword id="KW-0221">Differentiation</keyword>
<keyword id="KW-0325">Glycoprotein</keyword>
<keyword id="KW-0379">Hydroxylation</keyword>
<keyword id="KW-1185">Reference proteome</keyword>
<keyword id="KW-0964">Secreted</keyword>
<keyword id="KW-0732">Signal</keyword>